<gene>
    <name type="primary">nicX</name>
    <name type="ordered locus">PP_3945</name>
</gene>
<accession>Q88FY1</accession>
<evidence type="ECO:0000255" key="1"/>
<evidence type="ECO:0000269" key="2">
    <source>
    </source>
</evidence>
<evidence type="ECO:0000269" key="3">
    <source>
    </source>
</evidence>
<evidence type="ECO:0000269" key="4">
    <source>
    </source>
</evidence>
<evidence type="ECO:0000305" key="5">
    <source>
    </source>
</evidence>
<evidence type="ECO:0007829" key="6">
    <source>
        <dbReference type="PDB" id="7CNT"/>
    </source>
</evidence>
<evidence type="ECO:0007829" key="7">
    <source>
        <dbReference type="PDB" id="7CUP"/>
    </source>
</evidence>
<protein>
    <recommendedName>
        <fullName>2,5-dihydroxypyridine 5,6-dioxygenase</fullName>
        <shortName>2,5-DHP dioxygenase</shortName>
        <ecNumber>1.13.11.9</ecNumber>
    </recommendedName>
    <alternativeName>
        <fullName>Nicotinate degradation protein X</fullName>
    </alternativeName>
</protein>
<sequence length="350" mass="39017">MPVSNAQLTQMFEHVLKLSRVDETQSVAVLKSHYSDPRTVNAAMEAAQRLKAKVYAVELPAFNHPTAMGNDMTAYCGDTALTGNLAAQRALEAADLVVDTMMLLHSPEQEQILKTGTRILLAVEPPEVLARMLPTEDDKRRVLAAETLLKQARSLHVRSKAGSDFHAPLGQYPAVTEYGYADEPGRWDHWPSGFLFTWPNEDSAEGTLVLDVGDIILPFKNYCRERITLEIEKGFITGIHGGFEAEYLRDYMKYFNDPEVYGISHIGWGLQPRAQWTAMGLHDRNDGMCMDARAFYGNFLFSTGPNTEVGGKRKTPCHLDIPLRNCDIYLDDKAVVLAGDVVAPEESRAR</sequence>
<name>NICX_PSEPK</name>
<dbReference type="EC" id="1.13.11.9"/>
<dbReference type="EMBL" id="AE015451">
    <property type="protein sequence ID" value="AAN69539.1"/>
    <property type="molecule type" value="Genomic_DNA"/>
</dbReference>
<dbReference type="RefSeq" id="NP_746075.1">
    <property type="nucleotide sequence ID" value="NC_002947.4"/>
</dbReference>
<dbReference type="RefSeq" id="WP_004577272.1">
    <property type="nucleotide sequence ID" value="NZ_CP169744.1"/>
</dbReference>
<dbReference type="PDB" id="7CN3">
    <property type="method" value="X-ray"/>
    <property type="resolution" value="2.20 A"/>
    <property type="chains" value="A/B/C/D/E/F=1-350"/>
</dbReference>
<dbReference type="PDB" id="7CNT">
    <property type="method" value="X-ray"/>
    <property type="resolution" value="2.28 A"/>
    <property type="chains" value="A/B/C/D/E/F=1-350"/>
</dbReference>
<dbReference type="PDB" id="7CUP">
    <property type="method" value="X-ray"/>
    <property type="resolution" value="2.00 A"/>
    <property type="chains" value="A/B/C/D/E/F=1-350"/>
</dbReference>
<dbReference type="PDBsum" id="7CN3"/>
<dbReference type="PDBsum" id="7CNT"/>
<dbReference type="PDBsum" id="7CUP"/>
<dbReference type="SMR" id="Q88FY1"/>
<dbReference type="STRING" id="160488.PP_3945"/>
<dbReference type="PaxDb" id="160488-PP_3945"/>
<dbReference type="KEGG" id="ppu:PP_3945"/>
<dbReference type="PATRIC" id="fig|160488.4.peg.4200"/>
<dbReference type="eggNOG" id="COG2309">
    <property type="taxonomic scope" value="Bacteria"/>
</dbReference>
<dbReference type="HOGENOM" id="CLU_067564_0_0_6"/>
<dbReference type="OrthoDB" id="6918951at2"/>
<dbReference type="PhylomeDB" id="Q88FY1"/>
<dbReference type="BioCyc" id="MetaCyc:G1G01-4210-MONOMER"/>
<dbReference type="BioCyc" id="PPUT160488:G1G01-4210-MONOMER"/>
<dbReference type="SABIO-RK" id="Q88FY1"/>
<dbReference type="UniPathway" id="UPA01010"/>
<dbReference type="Proteomes" id="UP000000556">
    <property type="component" value="Chromosome"/>
</dbReference>
<dbReference type="GO" id="GO:0047075">
    <property type="term" value="F:2,5-dihydroxypyridine 5,6-dioxygenase activity"/>
    <property type="evidence" value="ECO:0000314"/>
    <property type="project" value="UniProtKB"/>
</dbReference>
<dbReference type="GO" id="GO:0046872">
    <property type="term" value="F:metal ion binding"/>
    <property type="evidence" value="ECO:0007669"/>
    <property type="project" value="UniProtKB-KW"/>
</dbReference>
<dbReference type="GO" id="GO:1901848">
    <property type="term" value="P:nicotinate catabolic process"/>
    <property type="evidence" value="ECO:0000314"/>
    <property type="project" value="UniProtKB"/>
</dbReference>
<dbReference type="InterPro" id="IPR052170">
    <property type="entry name" value="M29_Exopeptidase"/>
</dbReference>
<dbReference type="PANTHER" id="PTHR34448">
    <property type="entry name" value="AMINOPEPTIDASE"/>
    <property type="match status" value="1"/>
</dbReference>
<dbReference type="PANTHER" id="PTHR34448:SF1">
    <property type="entry name" value="BLL6088 PROTEIN"/>
    <property type="match status" value="1"/>
</dbReference>
<dbReference type="SUPFAM" id="SSF144052">
    <property type="entry name" value="Thermophilic metalloprotease-like"/>
    <property type="match status" value="1"/>
</dbReference>
<feature type="chain" id="PRO_0000418469" description="2,5-dihydroxypyridine 5,6-dioxygenase">
    <location>
        <begin position="1"/>
        <end position="350"/>
    </location>
</feature>
<feature type="binding site" evidence="1">
    <location>
        <position position="265"/>
    </location>
    <ligand>
        <name>Fe cation</name>
        <dbReference type="ChEBI" id="CHEBI:24875"/>
    </ligand>
</feature>
<feature type="binding site" evidence="1">
    <location>
        <position position="318"/>
    </location>
    <ligand>
        <name>Fe cation</name>
        <dbReference type="ChEBI" id="CHEBI:24875"/>
    </ligand>
</feature>
<feature type="binding site" evidence="1">
    <location>
        <position position="320"/>
    </location>
    <ligand>
        <name>Fe cation</name>
        <dbReference type="ChEBI" id="CHEBI:24875"/>
    </ligand>
</feature>
<feature type="helix" evidence="7">
    <location>
        <begin position="5"/>
        <end position="18"/>
    </location>
</feature>
<feature type="strand" evidence="7">
    <location>
        <begin position="26"/>
        <end position="31"/>
    </location>
</feature>
<feature type="helix" evidence="7">
    <location>
        <begin position="37"/>
        <end position="49"/>
    </location>
</feature>
<feature type="strand" evidence="7">
    <location>
        <begin position="53"/>
        <end position="58"/>
    </location>
</feature>
<feature type="helix" evidence="7">
    <location>
        <begin position="72"/>
        <end position="74"/>
    </location>
</feature>
<feature type="turn" evidence="7">
    <location>
        <begin position="80"/>
        <end position="83"/>
    </location>
</feature>
<feature type="helix" evidence="7">
    <location>
        <begin position="85"/>
        <end position="92"/>
    </location>
</feature>
<feature type="strand" evidence="7">
    <location>
        <begin position="94"/>
        <end position="101"/>
    </location>
</feature>
<feature type="helix" evidence="7">
    <location>
        <begin position="107"/>
        <end position="114"/>
    </location>
</feature>
<feature type="strand" evidence="7">
    <location>
        <begin position="118"/>
        <end position="121"/>
    </location>
</feature>
<feature type="helix" evidence="7">
    <location>
        <begin position="126"/>
        <end position="131"/>
    </location>
</feature>
<feature type="helix" evidence="7">
    <location>
        <begin position="136"/>
        <end position="151"/>
    </location>
</feature>
<feature type="strand" evidence="7">
    <location>
        <begin position="153"/>
        <end position="158"/>
    </location>
</feature>
<feature type="strand" evidence="7">
    <location>
        <begin position="164"/>
        <end position="168"/>
    </location>
</feature>
<feature type="strand" evidence="7">
    <location>
        <begin position="170"/>
        <end position="172"/>
    </location>
</feature>
<feature type="strand" evidence="7">
    <location>
        <begin position="175"/>
        <end position="177"/>
    </location>
</feature>
<feature type="strand" evidence="7">
    <location>
        <begin position="187"/>
        <end position="191"/>
    </location>
</feature>
<feature type="strand" evidence="7">
    <location>
        <begin position="194"/>
        <end position="197"/>
    </location>
</feature>
<feature type="turn" evidence="6">
    <location>
        <begin position="201"/>
        <end position="203"/>
    </location>
</feature>
<feature type="strand" evidence="7">
    <location>
        <begin position="205"/>
        <end position="210"/>
    </location>
</feature>
<feature type="strand" evidence="7">
    <location>
        <begin position="215"/>
        <end position="217"/>
    </location>
</feature>
<feature type="turn" evidence="7">
    <location>
        <begin position="218"/>
        <end position="220"/>
    </location>
</feature>
<feature type="strand" evidence="7">
    <location>
        <begin position="227"/>
        <end position="232"/>
    </location>
</feature>
<feature type="strand" evidence="7">
    <location>
        <begin position="235"/>
        <end position="242"/>
    </location>
</feature>
<feature type="helix" evidence="7">
    <location>
        <begin position="243"/>
        <end position="253"/>
    </location>
</feature>
<feature type="helix" evidence="7">
    <location>
        <begin position="258"/>
        <end position="261"/>
    </location>
</feature>
<feature type="strand" evidence="7">
    <location>
        <begin position="262"/>
        <end position="269"/>
    </location>
</feature>
<feature type="helix" evidence="7">
    <location>
        <begin position="278"/>
        <end position="281"/>
    </location>
</feature>
<feature type="helix" evidence="7">
    <location>
        <begin position="284"/>
        <end position="286"/>
    </location>
</feature>
<feature type="helix" evidence="7">
    <location>
        <begin position="290"/>
        <end position="294"/>
    </location>
</feature>
<feature type="strand" evidence="7">
    <location>
        <begin position="299"/>
        <end position="304"/>
    </location>
</feature>
<feature type="helix" evidence="7">
    <location>
        <begin position="307"/>
        <end position="309"/>
    </location>
</feature>
<feature type="strand" evidence="7">
    <location>
        <begin position="319"/>
        <end position="325"/>
    </location>
</feature>
<feature type="strand" evidence="7">
    <location>
        <begin position="327"/>
        <end position="330"/>
    </location>
</feature>
<feature type="strand" evidence="7">
    <location>
        <begin position="333"/>
        <end position="337"/>
    </location>
</feature>
<feature type="helix" evidence="7">
    <location>
        <begin position="345"/>
        <end position="347"/>
    </location>
</feature>
<organism>
    <name type="scientific">Pseudomonas putida (strain ATCC 47054 / DSM 6125 / CFBP 8728 / NCIMB 11950 / KT2440)</name>
    <dbReference type="NCBI Taxonomy" id="160488"/>
    <lineage>
        <taxon>Bacteria</taxon>
        <taxon>Pseudomonadati</taxon>
        <taxon>Pseudomonadota</taxon>
        <taxon>Gammaproteobacteria</taxon>
        <taxon>Pseudomonadales</taxon>
        <taxon>Pseudomonadaceae</taxon>
        <taxon>Pseudomonas</taxon>
    </lineage>
</organism>
<keyword id="KW-0002">3D-structure</keyword>
<keyword id="KW-0058">Aromatic hydrocarbons catabolism</keyword>
<keyword id="KW-0408">Iron</keyword>
<keyword id="KW-0479">Metal-binding</keyword>
<keyword id="KW-0560">Oxidoreductase</keyword>
<keyword id="KW-1185">Reference proteome</keyword>
<proteinExistence type="evidence at protein level"/>
<comment type="function">
    <text evidence="2">Catalyzes the dioxygenolytic ring cleavage of 2,5-dihydroxypyridine between carbons 5 and 6 generating N-formylmaleamate in the aerobic nicotinate degradation pathway.</text>
</comment>
<comment type="catalytic activity">
    <reaction evidence="2 3 4">
        <text>2,5-dihydroxypyridine + O2 = N-formylmaleamate + H(+)</text>
        <dbReference type="Rhea" id="RHEA:27522"/>
        <dbReference type="ChEBI" id="CHEBI:15378"/>
        <dbReference type="ChEBI" id="CHEBI:15379"/>
        <dbReference type="ChEBI" id="CHEBI:16364"/>
        <dbReference type="ChEBI" id="CHEBI:59911"/>
        <dbReference type="EC" id="1.13.11.9"/>
    </reaction>
</comment>
<comment type="cofactor">
    <cofactor evidence="5">
        <name>Fe(2+)</name>
        <dbReference type="ChEBI" id="CHEBI:29033"/>
    </cofactor>
</comment>
<comment type="biophysicochemical properties">
    <kinetics>
        <KM evidence="2">70 uM for 2,5-dihydroxypyridine</KM>
        <Vmax evidence="2">2.3 umol/min/mg enzyme</Vmax>
    </kinetics>
</comment>
<comment type="pathway">
    <text evidence="2">Cofactor degradation; nicotinate degradation.</text>
</comment>
<comment type="disruption phenotype">
    <text evidence="2">Cells lack 2,5-dihydroxypyridine 5,6-dioxygenase activity.</text>
</comment>
<reference key="1">
    <citation type="journal article" date="2002" name="Environ. Microbiol.">
        <title>Complete genome sequence and comparative analysis of the metabolically versatile Pseudomonas putida KT2440.</title>
        <authorList>
            <person name="Nelson K.E."/>
            <person name="Weinel C."/>
            <person name="Paulsen I.T."/>
            <person name="Dodson R.J."/>
            <person name="Hilbert H."/>
            <person name="Martins dos Santos V.A.P."/>
            <person name="Fouts D.E."/>
            <person name="Gill S.R."/>
            <person name="Pop M."/>
            <person name="Holmes M."/>
            <person name="Brinkac L.M."/>
            <person name="Beanan M.J."/>
            <person name="DeBoy R.T."/>
            <person name="Daugherty S.C."/>
            <person name="Kolonay J.F."/>
            <person name="Madupu R."/>
            <person name="Nelson W.C."/>
            <person name="White O."/>
            <person name="Peterson J.D."/>
            <person name="Khouri H.M."/>
            <person name="Hance I."/>
            <person name="Chris Lee P."/>
            <person name="Holtzapple E.K."/>
            <person name="Scanlan D."/>
            <person name="Tran K."/>
            <person name="Moazzez A."/>
            <person name="Utterback T.R."/>
            <person name="Rizzo M."/>
            <person name="Lee K."/>
            <person name="Kosack D."/>
            <person name="Moestl D."/>
            <person name="Wedler H."/>
            <person name="Lauber J."/>
            <person name="Stjepandic D."/>
            <person name="Hoheisel J."/>
            <person name="Straetz M."/>
            <person name="Heim S."/>
            <person name="Kiewitz C."/>
            <person name="Eisen J.A."/>
            <person name="Timmis K.N."/>
            <person name="Duesterhoeft A."/>
            <person name="Tuemmler B."/>
            <person name="Fraser C.M."/>
        </authorList>
    </citation>
    <scope>NUCLEOTIDE SEQUENCE [LARGE SCALE GENOMIC DNA]</scope>
    <source>
        <strain>ATCC 47054 / DSM 6125 / CFBP 8728 / NCIMB 11950 / KT2440</strain>
    </source>
</reference>
<reference key="2">
    <citation type="journal article" date="1971" name="J. Biol. Chem.">
        <title>The metabolism of nicotinic acid. I. Purification and properties of 2,5-dihydroxypyridine oxygenase from Pseudomonas putida N-9.</title>
        <authorList>
            <person name="Gauthier J.J."/>
            <person name="Rittenberg S.C."/>
        </authorList>
    </citation>
    <scope>CATALYTIC ACTIVITY</scope>
</reference>
<reference key="3">
    <citation type="journal article" date="1971" name="J. Biol. Chem.">
        <title>The metabolism of nicotinic acid. II. 2,5-dihydroxypyridine oxidation, product formation, and oxygen 18 incorporation.</title>
        <authorList>
            <person name="Gauthier J.J."/>
            <person name="Rittenberg S.C."/>
        </authorList>
    </citation>
    <scope>CATALYTIC ACTIVITY</scope>
</reference>
<reference key="4">
    <citation type="journal article" date="2008" name="Proc. Natl. Acad. Sci. U.S.A.">
        <title>Deciphering the genetic determinants for aerobic nicotinic acid degradation: the nic cluster from Pseudomonas putida KT2440.</title>
        <authorList>
            <person name="Jimenez J.I."/>
            <person name="Canales A."/>
            <person name="Jimenez-Barbero J."/>
            <person name="Ginalski K."/>
            <person name="Rychlewski L."/>
            <person name="Garcia J.L."/>
            <person name="Diaz E."/>
        </authorList>
    </citation>
    <scope>FUNCTION</scope>
    <scope>CATALYTIC ACTIVITY</scope>
    <scope>PATHWAY</scope>
    <scope>BIOPHYSICOCHEMICAL PROPERTIES</scope>
    <scope>COFACTOR</scope>
    <scope>DISRUPTION PHENOTYPE</scope>
    <source>
        <strain>ATCC 47054 / DSM 6125 / CFBP 8728 / NCIMB 11950 / KT2440</strain>
    </source>
</reference>